<accession>A7FTE0</accession>
<name>GRDA_CLOB1</name>
<keyword id="KW-0560">Oxidoreductase</keyword>
<keyword id="KW-0712">Selenocysteine</keyword>
<protein>
    <recommendedName>
        <fullName evidence="1">Glycine/sarcosine/betaine reductase complex component A</fullName>
        <ecNumber evidence="1">1.21.4.2</ecNumber>
        <ecNumber evidence="1">1.21.4.3</ecNumber>
        <ecNumber evidence="1">1.21.4.4</ecNumber>
    </recommendedName>
    <alternativeName>
        <fullName evidence="1">Selenoprotein PA</fullName>
    </alternativeName>
    <alternativeName>
        <fullName evidence="1">Thioredoxin reductase complex selenoprotein A</fullName>
    </alternativeName>
</protein>
<gene>
    <name evidence="1" type="primary">grdA</name>
    <name type="ordered locus">CLB_1290</name>
</gene>
<proteinExistence type="inferred from homology"/>
<reference key="1">
    <citation type="journal article" date="2007" name="PLoS ONE">
        <title>Analysis of the neurotoxin complex genes in Clostridium botulinum A1-A4 and B1 strains: BoNT/A3, /Ba4 and /B1 clusters are located within plasmids.</title>
        <authorList>
            <person name="Smith T.J."/>
            <person name="Hill K.K."/>
            <person name="Foley B.T."/>
            <person name="Detter J.C."/>
            <person name="Munk A.C."/>
            <person name="Bruce D.C."/>
            <person name="Doggett N.A."/>
            <person name="Smith L.A."/>
            <person name="Marks J.D."/>
            <person name="Xie G."/>
            <person name="Brettin T.S."/>
        </authorList>
    </citation>
    <scope>NUCLEOTIDE SEQUENCE [LARGE SCALE GENOMIC DNA]</scope>
    <source>
        <strain>ATCC 19397 / Type A</strain>
    </source>
</reference>
<comment type="function">
    <text evidence="1">In the first step of glycine, betaine and sarcosine reductases, the substrate is bound to component PB via a Schiff base intermediate. Then the PB-activated substrate is nucleophilically attacked by the selenol anion of component PA to transform it to a carboxymethylated selenoether and the respective amine. By action of component PC, acetyl phosphate is formed, leaving component PA in its oxidized state. Finally component PA becomes reduced by the thioredoxin system to start a new catalytic cycle of reductive deamination.</text>
</comment>
<comment type="catalytic activity">
    <reaction evidence="1">
        <text>acetyl phosphate + [thioredoxin]-disulfide + NH4(+) + H2O = [thioredoxin]-dithiol + glycine + phosphate + H(+)</text>
        <dbReference type="Rhea" id="RHEA:12232"/>
        <dbReference type="Rhea" id="RHEA-COMP:10698"/>
        <dbReference type="Rhea" id="RHEA-COMP:10700"/>
        <dbReference type="ChEBI" id="CHEBI:15377"/>
        <dbReference type="ChEBI" id="CHEBI:15378"/>
        <dbReference type="ChEBI" id="CHEBI:22191"/>
        <dbReference type="ChEBI" id="CHEBI:28938"/>
        <dbReference type="ChEBI" id="CHEBI:29950"/>
        <dbReference type="ChEBI" id="CHEBI:43474"/>
        <dbReference type="ChEBI" id="CHEBI:50058"/>
        <dbReference type="ChEBI" id="CHEBI:57305"/>
        <dbReference type="EC" id="1.21.4.2"/>
    </reaction>
</comment>
<comment type="catalytic activity">
    <reaction evidence="1">
        <text>acetyl phosphate + methylamine + [thioredoxin]-disulfide + H2O = sarcosine + [thioredoxin]-dithiol + phosphate + H(+)</text>
        <dbReference type="Rhea" id="RHEA:12825"/>
        <dbReference type="Rhea" id="RHEA-COMP:10698"/>
        <dbReference type="Rhea" id="RHEA-COMP:10700"/>
        <dbReference type="ChEBI" id="CHEBI:15377"/>
        <dbReference type="ChEBI" id="CHEBI:15378"/>
        <dbReference type="ChEBI" id="CHEBI:22191"/>
        <dbReference type="ChEBI" id="CHEBI:29950"/>
        <dbReference type="ChEBI" id="CHEBI:43474"/>
        <dbReference type="ChEBI" id="CHEBI:50058"/>
        <dbReference type="ChEBI" id="CHEBI:57433"/>
        <dbReference type="ChEBI" id="CHEBI:59338"/>
        <dbReference type="EC" id="1.21.4.3"/>
    </reaction>
</comment>
<comment type="catalytic activity">
    <reaction evidence="1">
        <text>acetyl phosphate + trimethylamine + [thioredoxin]-disulfide + H2O = glycine betaine + [thioredoxin]-dithiol + phosphate + H(+)</text>
        <dbReference type="Rhea" id="RHEA:11848"/>
        <dbReference type="Rhea" id="RHEA-COMP:10698"/>
        <dbReference type="Rhea" id="RHEA-COMP:10700"/>
        <dbReference type="ChEBI" id="CHEBI:15377"/>
        <dbReference type="ChEBI" id="CHEBI:15378"/>
        <dbReference type="ChEBI" id="CHEBI:17750"/>
        <dbReference type="ChEBI" id="CHEBI:22191"/>
        <dbReference type="ChEBI" id="CHEBI:29950"/>
        <dbReference type="ChEBI" id="CHEBI:43474"/>
        <dbReference type="ChEBI" id="CHEBI:50058"/>
        <dbReference type="ChEBI" id="CHEBI:58389"/>
        <dbReference type="EC" id="1.21.4.4"/>
    </reaction>
</comment>
<comment type="subunit">
    <text evidence="1">Monomer. Component of the glycine, sarcosine and betaine reductase complexes, together with components B and C.</text>
</comment>
<comment type="similarity">
    <text evidence="1">Belongs to the GrdA family.</text>
</comment>
<dbReference type="EC" id="1.21.4.2" evidence="1"/>
<dbReference type="EC" id="1.21.4.3" evidence="1"/>
<dbReference type="EC" id="1.21.4.4" evidence="1"/>
<dbReference type="EMBL" id="CP000726">
    <property type="protein sequence ID" value="ABS34115.1"/>
    <property type="molecule type" value="Genomic_DNA"/>
</dbReference>
<dbReference type="KEGG" id="cba:CLB_1290"/>
<dbReference type="HOGENOM" id="CLU_142275_0_0_9"/>
<dbReference type="GO" id="GO:0030700">
    <property type="term" value="C:glycine reductase complex"/>
    <property type="evidence" value="ECO:0007669"/>
    <property type="project" value="InterPro"/>
</dbReference>
<dbReference type="GO" id="GO:0033795">
    <property type="term" value="F:betaine reductase activity"/>
    <property type="evidence" value="ECO:0007669"/>
    <property type="project" value="UniProtKB-EC"/>
</dbReference>
<dbReference type="GO" id="GO:0030699">
    <property type="term" value="F:glycine reductase activity"/>
    <property type="evidence" value="ECO:0007669"/>
    <property type="project" value="UniProtKB-UniRule"/>
</dbReference>
<dbReference type="GO" id="GO:0033794">
    <property type="term" value="F:sarcosine reductase activity"/>
    <property type="evidence" value="ECO:0007669"/>
    <property type="project" value="UniProtKB-EC"/>
</dbReference>
<dbReference type="HAMAP" id="MF_00826">
    <property type="entry name" value="GRDA"/>
    <property type="match status" value="1"/>
</dbReference>
<dbReference type="InterPro" id="IPR006812">
    <property type="entry name" value="GRDA"/>
</dbReference>
<dbReference type="NCBIfam" id="NF040748">
    <property type="entry name" value="reduct_selen_A"/>
    <property type="match status" value="1"/>
</dbReference>
<dbReference type="Pfam" id="PF04723">
    <property type="entry name" value="GRDA"/>
    <property type="match status" value="1"/>
</dbReference>
<dbReference type="PIRSF" id="PIRSF000181">
    <property type="entry name" value="Grc_selenoprot_A"/>
    <property type="match status" value="1"/>
</dbReference>
<organism>
    <name type="scientific">Clostridium botulinum (strain ATCC 19397 / Type A)</name>
    <dbReference type="NCBI Taxonomy" id="441770"/>
    <lineage>
        <taxon>Bacteria</taxon>
        <taxon>Bacillati</taxon>
        <taxon>Bacillota</taxon>
        <taxon>Clostridia</taxon>
        <taxon>Eubacteriales</taxon>
        <taxon>Clostridiaceae</taxon>
        <taxon>Clostridium</taxon>
    </lineage>
</organism>
<sequence>MSLFEGKKVIIIGDRDGIPGPAIEKCIEGTGAEVVFSSTECFVUTAAGAMDLENQKRVKTLTEKHGAENILVILGAAEGEAAGLAAETVTNGDPTFAGPLSNVQLGLRVYHAVEPEFKEEVNEEVYEEEIGMMEMVLEVDEIIEEMTDIRTEFCKFLD</sequence>
<evidence type="ECO:0000255" key="1">
    <source>
        <dbReference type="HAMAP-Rule" id="MF_00826"/>
    </source>
</evidence>
<evidence type="ECO:0000305" key="2"/>
<feature type="chain" id="PRO_1000062705" description="Glycine/sarcosine/betaine reductase complex component A">
    <location>
        <begin position="1"/>
        <end position="158"/>
    </location>
</feature>
<feature type="active site" evidence="1">
    <location>
        <position position="44"/>
    </location>
</feature>
<feature type="non-standard amino acid" description="Selenocysteine" evidence="2">
    <location>
        <position position="44"/>
    </location>
</feature>